<keyword id="KW-0067">ATP-binding</keyword>
<keyword id="KW-0119">Carbohydrate metabolism</keyword>
<keyword id="KW-0418">Kinase</keyword>
<keyword id="KW-0479">Metal-binding</keyword>
<keyword id="KW-0547">Nucleotide-binding</keyword>
<keyword id="KW-0808">Transferase</keyword>
<keyword id="KW-0862">Zinc</keyword>
<comment type="function">
    <text evidence="1">Catalyzes the phosphorylation of N-acetyl-D-glucosamine (GlcNAc) derived from cell-wall degradation, yielding GlcNAc-6-P.</text>
</comment>
<comment type="catalytic activity">
    <reaction evidence="1">
        <text>N-acetyl-D-glucosamine + ATP = N-acetyl-D-glucosamine 6-phosphate + ADP + H(+)</text>
        <dbReference type="Rhea" id="RHEA:17417"/>
        <dbReference type="ChEBI" id="CHEBI:15378"/>
        <dbReference type="ChEBI" id="CHEBI:30616"/>
        <dbReference type="ChEBI" id="CHEBI:57513"/>
        <dbReference type="ChEBI" id="CHEBI:456216"/>
        <dbReference type="ChEBI" id="CHEBI:506227"/>
        <dbReference type="EC" id="2.7.1.59"/>
    </reaction>
</comment>
<comment type="pathway">
    <text evidence="1">Cell wall biogenesis; peptidoglycan recycling.</text>
</comment>
<comment type="similarity">
    <text evidence="1">Belongs to the ROK (NagC/XylR) family. NagK subfamily.</text>
</comment>
<dbReference type="EC" id="2.7.1.59" evidence="1"/>
<dbReference type="EMBL" id="CP001144">
    <property type="protein sequence ID" value="ACH77011.1"/>
    <property type="molecule type" value="Genomic_DNA"/>
</dbReference>
<dbReference type="RefSeq" id="WP_000291339.1">
    <property type="nucleotide sequence ID" value="NC_011205.1"/>
</dbReference>
<dbReference type="SMR" id="B5FK86"/>
<dbReference type="KEGG" id="sed:SeD_A2148"/>
<dbReference type="HOGENOM" id="CLU_036604_0_3_6"/>
<dbReference type="UniPathway" id="UPA00544"/>
<dbReference type="Proteomes" id="UP000008322">
    <property type="component" value="Chromosome"/>
</dbReference>
<dbReference type="GO" id="GO:0005524">
    <property type="term" value="F:ATP binding"/>
    <property type="evidence" value="ECO:0007669"/>
    <property type="project" value="UniProtKB-UniRule"/>
</dbReference>
<dbReference type="GO" id="GO:0045127">
    <property type="term" value="F:N-acetylglucosamine kinase activity"/>
    <property type="evidence" value="ECO:0007669"/>
    <property type="project" value="UniProtKB-UniRule"/>
</dbReference>
<dbReference type="GO" id="GO:0008270">
    <property type="term" value="F:zinc ion binding"/>
    <property type="evidence" value="ECO:0007669"/>
    <property type="project" value="UniProtKB-UniRule"/>
</dbReference>
<dbReference type="GO" id="GO:0006044">
    <property type="term" value="P:N-acetylglucosamine metabolic process"/>
    <property type="evidence" value="ECO:0007669"/>
    <property type="project" value="UniProtKB-UniRule"/>
</dbReference>
<dbReference type="GO" id="GO:0009254">
    <property type="term" value="P:peptidoglycan turnover"/>
    <property type="evidence" value="ECO:0007669"/>
    <property type="project" value="UniProtKB-UniRule"/>
</dbReference>
<dbReference type="CDD" id="cd24057">
    <property type="entry name" value="ASKHA_NBD_ROK_NAGK"/>
    <property type="match status" value="1"/>
</dbReference>
<dbReference type="FunFam" id="3.30.420.40:FF:000049">
    <property type="entry name" value="N-acetyl-D-glucosamine kinase"/>
    <property type="match status" value="1"/>
</dbReference>
<dbReference type="FunFam" id="3.30.420.40:FF:000051">
    <property type="entry name" value="N-acetyl-D-glucosamine kinase"/>
    <property type="match status" value="1"/>
</dbReference>
<dbReference type="Gene3D" id="3.30.420.40">
    <property type="match status" value="2"/>
</dbReference>
<dbReference type="HAMAP" id="MF_01271">
    <property type="entry name" value="GlcNAc_kinase"/>
    <property type="match status" value="1"/>
</dbReference>
<dbReference type="InterPro" id="IPR043129">
    <property type="entry name" value="ATPase_NBD"/>
</dbReference>
<dbReference type="InterPro" id="IPR023505">
    <property type="entry name" value="N-acetyl-D-glucosamine_kinase"/>
</dbReference>
<dbReference type="InterPro" id="IPR000600">
    <property type="entry name" value="ROK"/>
</dbReference>
<dbReference type="InterPro" id="IPR049874">
    <property type="entry name" value="ROK_cs"/>
</dbReference>
<dbReference type="NCBIfam" id="NF009835">
    <property type="entry name" value="PRK13310.1"/>
    <property type="match status" value="1"/>
</dbReference>
<dbReference type="PANTHER" id="PTHR18964:SF162">
    <property type="entry name" value="N-ACETYL-D-GLUCOSAMINE KINASE"/>
    <property type="match status" value="1"/>
</dbReference>
<dbReference type="PANTHER" id="PTHR18964">
    <property type="entry name" value="ROK (REPRESSOR, ORF, KINASE) FAMILY"/>
    <property type="match status" value="1"/>
</dbReference>
<dbReference type="Pfam" id="PF00480">
    <property type="entry name" value="ROK"/>
    <property type="match status" value="1"/>
</dbReference>
<dbReference type="SUPFAM" id="SSF53067">
    <property type="entry name" value="Actin-like ATPase domain"/>
    <property type="match status" value="1"/>
</dbReference>
<dbReference type="PROSITE" id="PS01125">
    <property type="entry name" value="ROK"/>
    <property type="match status" value="1"/>
</dbReference>
<name>NAGK_SALDC</name>
<feature type="chain" id="PRO_1000140191" description="N-acetyl-D-glucosamine kinase">
    <location>
        <begin position="1"/>
        <end position="303"/>
    </location>
</feature>
<feature type="binding site" evidence="1">
    <location>
        <begin position="4"/>
        <end position="11"/>
    </location>
    <ligand>
        <name>ATP</name>
        <dbReference type="ChEBI" id="CHEBI:30616"/>
    </ligand>
</feature>
<feature type="binding site" evidence="1">
    <location>
        <begin position="133"/>
        <end position="140"/>
    </location>
    <ligand>
        <name>ATP</name>
        <dbReference type="ChEBI" id="CHEBI:30616"/>
    </ligand>
</feature>
<feature type="binding site" evidence="1">
    <location>
        <position position="157"/>
    </location>
    <ligand>
        <name>Zn(2+)</name>
        <dbReference type="ChEBI" id="CHEBI:29105"/>
    </ligand>
</feature>
<feature type="binding site" evidence="1">
    <location>
        <position position="177"/>
    </location>
    <ligand>
        <name>Zn(2+)</name>
        <dbReference type="ChEBI" id="CHEBI:29105"/>
    </ligand>
</feature>
<feature type="binding site" evidence="1">
    <location>
        <position position="179"/>
    </location>
    <ligand>
        <name>Zn(2+)</name>
        <dbReference type="ChEBI" id="CHEBI:29105"/>
    </ligand>
</feature>
<feature type="binding site" evidence="1">
    <location>
        <position position="184"/>
    </location>
    <ligand>
        <name>Zn(2+)</name>
        <dbReference type="ChEBI" id="CHEBI:29105"/>
    </ligand>
</feature>
<proteinExistence type="inferred from homology"/>
<evidence type="ECO:0000255" key="1">
    <source>
        <dbReference type="HAMAP-Rule" id="MF_01271"/>
    </source>
</evidence>
<organism>
    <name type="scientific">Salmonella dublin (strain CT_02021853)</name>
    <dbReference type="NCBI Taxonomy" id="439851"/>
    <lineage>
        <taxon>Bacteria</taxon>
        <taxon>Pseudomonadati</taxon>
        <taxon>Pseudomonadota</taxon>
        <taxon>Gammaproteobacteria</taxon>
        <taxon>Enterobacterales</taxon>
        <taxon>Enterobacteriaceae</taxon>
        <taxon>Salmonella</taxon>
    </lineage>
</organism>
<protein>
    <recommendedName>
        <fullName evidence="1">N-acetyl-D-glucosamine kinase</fullName>
        <ecNumber evidence="1">2.7.1.59</ecNumber>
    </recommendedName>
    <alternativeName>
        <fullName evidence="1">GlcNAc kinase</fullName>
    </alternativeName>
</protein>
<gene>
    <name evidence="1" type="primary">nagK</name>
    <name type="ordered locus">SeD_A2148</name>
</gene>
<sequence>MYYGFDIGGTKIALGVFDSTRRLQWEKRVPTPHTSYSAFLDAVCELVEEADQRFGVKGSVGIGIPGMPETEDGTLYAANVPAASGKPLRADLSARLDRDVRLDNDANCFALSEAWDDEFTQYPLVMGLILGTGVGGGLVLNGKPITGQSYITGEFGHMRLPVDALTLMGFDFPLRRCGCGQMGCIENYLSGRGFAWLYQHYYHQSLQAPEIIALWEQGDEQAHAHVERYLDLLAVCLGNILTIVDPDLLVIGGGLSNFTAITTQLAERLPRHLLPVARAPRIERARHGDAGGRRGAAFLHLTD</sequence>
<reference key="1">
    <citation type="journal article" date="2011" name="J. Bacteriol.">
        <title>Comparative genomics of 28 Salmonella enterica isolates: evidence for CRISPR-mediated adaptive sublineage evolution.</title>
        <authorList>
            <person name="Fricke W.F."/>
            <person name="Mammel M.K."/>
            <person name="McDermott P.F."/>
            <person name="Tartera C."/>
            <person name="White D.G."/>
            <person name="Leclerc J.E."/>
            <person name="Ravel J."/>
            <person name="Cebula T.A."/>
        </authorList>
    </citation>
    <scope>NUCLEOTIDE SEQUENCE [LARGE SCALE GENOMIC DNA]</scope>
    <source>
        <strain>CT_02021853</strain>
    </source>
</reference>
<accession>B5FK86</accession>